<protein>
    <recommendedName>
        <fullName>BTB/POZ domain-containing protein 3</fullName>
    </recommendedName>
</protein>
<accession>Q9Y2F9</accession>
<accession>D3DW19</accession>
<accession>Q5JY73</accession>
<evidence type="ECO:0000250" key="1"/>
<evidence type="ECO:0000255" key="2">
    <source>
        <dbReference type="PROSITE-ProRule" id="PRU00037"/>
    </source>
</evidence>
<evidence type="ECO:0000256" key="3">
    <source>
        <dbReference type="SAM" id="MobiDB-lite"/>
    </source>
</evidence>
<evidence type="ECO:0000303" key="4">
    <source>
    </source>
</evidence>
<evidence type="ECO:0000305" key="5"/>
<sequence length="522" mass="58420">MVDDKEKNMKCLTFFLMLPETVKNRSKKSSKKANTSSSSSNSSKLPPVCYEIITLKTKKKKMAADIFPRKKPANSSSTSVQQYHQQNLSNNNLIPAPNWQGLYPTIRERNAMMFNNDLMADVHFVVGPPGGTQRLPGHKYVLAVGSSVFHAMFYGELAEDKDEIRIPDVEPAAFLAMLKYIYCDEIDLAADTVLATLYAAKKYIVPHLARACVNFLETSLSAKNACVLLSQSCLFEEPDLTQRCWEVIDAQAELALKSEGFCDIDFQTLESILRRETLNAKEIVVFEAALNWAEVECQRQDLALSIENKRKVLGKALYLIRIPTMALDDFANGAAQSGVLTLNETNDIFLWYTAAKKPELQFVSKARKGLVPQRCHRFQSCAYRSNQWRYRGRCDSIQFAVDKRVFIAGFGLYGSSCGSAEYSAKIELKRQGVVLGQNLSKYFSDGSSNTFPVWFEYPVQIEPDTFYTASVILDGNELSYFGQEGMTEVQCGKVTVQFQCSSDSTNGTGVQGGQIPELIFYA</sequence>
<name>BTBD3_HUMAN</name>
<reference key="1">
    <citation type="journal article" date="1999" name="DNA Res.">
        <title>Prediction of the coding sequences of unidentified human genes. XIII. The complete sequences of 100 new cDNA clones from brain which code for large proteins in vitro.</title>
        <authorList>
            <person name="Nagase T."/>
            <person name="Ishikawa K."/>
            <person name="Suyama M."/>
            <person name="Kikuno R."/>
            <person name="Hirosawa M."/>
            <person name="Miyajima N."/>
            <person name="Tanaka A."/>
            <person name="Kotani H."/>
            <person name="Nomura N."/>
            <person name="Ohara O."/>
        </authorList>
    </citation>
    <scope>NUCLEOTIDE SEQUENCE [LARGE SCALE MRNA] (ISOFORM 1)</scope>
    <source>
        <tissue>Brain</tissue>
    </source>
</reference>
<reference key="2">
    <citation type="journal article" date="2001" name="Nature">
        <title>The DNA sequence and comparative analysis of human chromosome 20.</title>
        <authorList>
            <person name="Deloukas P."/>
            <person name="Matthews L.H."/>
            <person name="Ashurst J.L."/>
            <person name="Burton J."/>
            <person name="Gilbert J.G.R."/>
            <person name="Jones M."/>
            <person name="Stavrides G."/>
            <person name="Almeida J.P."/>
            <person name="Babbage A.K."/>
            <person name="Bagguley C.L."/>
            <person name="Bailey J."/>
            <person name="Barlow K.F."/>
            <person name="Bates K.N."/>
            <person name="Beard L.M."/>
            <person name="Beare D.M."/>
            <person name="Beasley O.P."/>
            <person name="Bird C.P."/>
            <person name="Blakey S.E."/>
            <person name="Bridgeman A.M."/>
            <person name="Brown A.J."/>
            <person name="Buck D."/>
            <person name="Burrill W.D."/>
            <person name="Butler A.P."/>
            <person name="Carder C."/>
            <person name="Carter N.P."/>
            <person name="Chapman J.C."/>
            <person name="Clamp M."/>
            <person name="Clark G."/>
            <person name="Clark L.N."/>
            <person name="Clark S.Y."/>
            <person name="Clee C.M."/>
            <person name="Clegg S."/>
            <person name="Cobley V.E."/>
            <person name="Collier R.E."/>
            <person name="Connor R.E."/>
            <person name="Corby N.R."/>
            <person name="Coulson A."/>
            <person name="Coville G.J."/>
            <person name="Deadman R."/>
            <person name="Dhami P.D."/>
            <person name="Dunn M."/>
            <person name="Ellington A.G."/>
            <person name="Frankland J.A."/>
            <person name="Fraser A."/>
            <person name="French L."/>
            <person name="Garner P."/>
            <person name="Grafham D.V."/>
            <person name="Griffiths C."/>
            <person name="Griffiths M.N.D."/>
            <person name="Gwilliam R."/>
            <person name="Hall R.E."/>
            <person name="Hammond S."/>
            <person name="Harley J.L."/>
            <person name="Heath P.D."/>
            <person name="Ho S."/>
            <person name="Holden J.L."/>
            <person name="Howden P.J."/>
            <person name="Huckle E."/>
            <person name="Hunt A.R."/>
            <person name="Hunt S.E."/>
            <person name="Jekosch K."/>
            <person name="Johnson C.M."/>
            <person name="Johnson D."/>
            <person name="Kay M.P."/>
            <person name="Kimberley A.M."/>
            <person name="King A."/>
            <person name="Knights A."/>
            <person name="Laird G.K."/>
            <person name="Lawlor S."/>
            <person name="Lehvaeslaiho M.H."/>
            <person name="Leversha M.A."/>
            <person name="Lloyd C."/>
            <person name="Lloyd D.M."/>
            <person name="Lovell J.D."/>
            <person name="Marsh V.L."/>
            <person name="Martin S.L."/>
            <person name="McConnachie L.J."/>
            <person name="McLay K."/>
            <person name="McMurray A.A."/>
            <person name="Milne S.A."/>
            <person name="Mistry D."/>
            <person name="Moore M.J.F."/>
            <person name="Mullikin J.C."/>
            <person name="Nickerson T."/>
            <person name="Oliver K."/>
            <person name="Parker A."/>
            <person name="Patel R."/>
            <person name="Pearce T.A.V."/>
            <person name="Peck A.I."/>
            <person name="Phillimore B.J.C.T."/>
            <person name="Prathalingam S.R."/>
            <person name="Plumb R.W."/>
            <person name="Ramsay H."/>
            <person name="Rice C.M."/>
            <person name="Ross M.T."/>
            <person name="Scott C.E."/>
            <person name="Sehra H.K."/>
            <person name="Shownkeen R."/>
            <person name="Sims S."/>
            <person name="Skuce C.D."/>
            <person name="Smith M.L."/>
            <person name="Soderlund C."/>
            <person name="Steward C.A."/>
            <person name="Sulston J.E."/>
            <person name="Swann R.M."/>
            <person name="Sycamore N."/>
            <person name="Taylor R."/>
            <person name="Tee L."/>
            <person name="Thomas D.W."/>
            <person name="Thorpe A."/>
            <person name="Tracey A."/>
            <person name="Tromans A.C."/>
            <person name="Vaudin M."/>
            <person name="Wall M."/>
            <person name="Wallis J.M."/>
            <person name="Whitehead S.L."/>
            <person name="Whittaker P."/>
            <person name="Willey D.L."/>
            <person name="Williams L."/>
            <person name="Williams S.A."/>
            <person name="Wilming L."/>
            <person name="Wray P.W."/>
            <person name="Hubbard T."/>
            <person name="Durbin R.M."/>
            <person name="Bentley D.R."/>
            <person name="Beck S."/>
            <person name="Rogers J."/>
        </authorList>
    </citation>
    <scope>NUCLEOTIDE SEQUENCE [LARGE SCALE GENOMIC DNA]</scope>
</reference>
<reference key="3">
    <citation type="submission" date="2005-09" db="EMBL/GenBank/DDBJ databases">
        <authorList>
            <person name="Mural R.J."/>
            <person name="Istrail S."/>
            <person name="Sutton G.G."/>
            <person name="Florea L."/>
            <person name="Halpern A.L."/>
            <person name="Mobarry C.M."/>
            <person name="Lippert R."/>
            <person name="Walenz B."/>
            <person name="Shatkay H."/>
            <person name="Dew I."/>
            <person name="Miller J.R."/>
            <person name="Flanigan M.J."/>
            <person name="Edwards N.J."/>
            <person name="Bolanos R."/>
            <person name="Fasulo D."/>
            <person name="Halldorsson B.V."/>
            <person name="Hannenhalli S."/>
            <person name="Turner R."/>
            <person name="Yooseph S."/>
            <person name="Lu F."/>
            <person name="Nusskern D.R."/>
            <person name="Shue B.C."/>
            <person name="Zheng X.H."/>
            <person name="Zhong F."/>
            <person name="Delcher A.L."/>
            <person name="Huson D.H."/>
            <person name="Kravitz S.A."/>
            <person name="Mouchard L."/>
            <person name="Reinert K."/>
            <person name="Remington K.A."/>
            <person name="Clark A.G."/>
            <person name="Waterman M.S."/>
            <person name="Eichler E.E."/>
            <person name="Adams M.D."/>
            <person name="Hunkapiller M.W."/>
            <person name="Myers E.W."/>
            <person name="Venter J.C."/>
        </authorList>
    </citation>
    <scope>NUCLEOTIDE SEQUENCE [LARGE SCALE GENOMIC DNA]</scope>
</reference>
<reference key="4">
    <citation type="journal article" date="2004" name="Genome Res.">
        <title>The status, quality, and expansion of the NIH full-length cDNA project: the Mammalian Gene Collection (MGC).</title>
        <authorList>
            <consortium name="The MGC Project Team"/>
        </authorList>
    </citation>
    <scope>NUCLEOTIDE SEQUENCE [LARGE SCALE MRNA] (ISOFORM 2)</scope>
    <source>
        <tissue>Brain</tissue>
    </source>
</reference>
<proteinExistence type="evidence at protein level"/>
<organism>
    <name type="scientific">Homo sapiens</name>
    <name type="common">Human</name>
    <dbReference type="NCBI Taxonomy" id="9606"/>
    <lineage>
        <taxon>Eukaryota</taxon>
        <taxon>Metazoa</taxon>
        <taxon>Chordata</taxon>
        <taxon>Craniata</taxon>
        <taxon>Vertebrata</taxon>
        <taxon>Euteleostomi</taxon>
        <taxon>Mammalia</taxon>
        <taxon>Eutheria</taxon>
        <taxon>Euarchontoglires</taxon>
        <taxon>Primates</taxon>
        <taxon>Haplorrhini</taxon>
        <taxon>Catarrhini</taxon>
        <taxon>Hominidae</taxon>
        <taxon>Homo</taxon>
    </lineage>
</organism>
<dbReference type="EMBL" id="AB023169">
    <property type="protein sequence ID" value="BAA76796.2"/>
    <property type="status" value="ALT_INIT"/>
    <property type="molecule type" value="mRNA"/>
</dbReference>
<dbReference type="EMBL" id="AL035448">
    <property type="status" value="NOT_ANNOTATED_CDS"/>
    <property type="molecule type" value="Genomic_DNA"/>
</dbReference>
<dbReference type="EMBL" id="CH471133">
    <property type="protein sequence ID" value="EAX10327.1"/>
    <property type="molecule type" value="Genomic_DNA"/>
</dbReference>
<dbReference type="EMBL" id="CH471133">
    <property type="protein sequence ID" value="EAX10328.1"/>
    <property type="molecule type" value="Genomic_DNA"/>
</dbReference>
<dbReference type="EMBL" id="BC101527">
    <property type="protein sequence ID" value="AAI01528.1"/>
    <property type="molecule type" value="mRNA"/>
</dbReference>
<dbReference type="EMBL" id="BC109315">
    <property type="protein sequence ID" value="AAI09316.1"/>
    <property type="molecule type" value="mRNA"/>
</dbReference>
<dbReference type="EMBL" id="BC109316">
    <property type="protein sequence ID" value="AAI09317.1"/>
    <property type="molecule type" value="mRNA"/>
</dbReference>
<dbReference type="CCDS" id="CCDS13113.1">
    <molecule id="Q9Y2F9-1"/>
</dbReference>
<dbReference type="CCDS" id="CCDS13114.1">
    <molecule id="Q9Y2F9-2"/>
</dbReference>
<dbReference type="RefSeq" id="NP_001269479.1">
    <molecule id="Q9Y2F9-2"/>
    <property type="nucleotide sequence ID" value="NM_001282550.3"/>
</dbReference>
<dbReference type="RefSeq" id="NP_001269480.1">
    <molecule id="Q9Y2F9-2"/>
    <property type="nucleotide sequence ID" value="NM_001282551.2"/>
</dbReference>
<dbReference type="RefSeq" id="NP_001381932.1">
    <molecule id="Q9Y2F9-2"/>
    <property type="nucleotide sequence ID" value="NM_001395003.1"/>
</dbReference>
<dbReference type="RefSeq" id="NP_001381934.1">
    <molecule id="Q9Y2F9-1"/>
    <property type="nucleotide sequence ID" value="NM_001395005.1"/>
</dbReference>
<dbReference type="RefSeq" id="NP_001381935.1">
    <molecule id="Q9Y2F9-1"/>
    <property type="nucleotide sequence ID" value="NM_001395006.1"/>
</dbReference>
<dbReference type="RefSeq" id="NP_001381936.1">
    <molecule id="Q9Y2F9-2"/>
    <property type="nucleotide sequence ID" value="NM_001395007.1"/>
</dbReference>
<dbReference type="RefSeq" id="NP_001381938.1">
    <molecule id="Q9Y2F9-2"/>
    <property type="nucleotide sequence ID" value="NM_001395009.1"/>
</dbReference>
<dbReference type="RefSeq" id="NP_055777.1">
    <molecule id="Q9Y2F9-1"/>
    <property type="nucleotide sequence ID" value="NM_014962.4"/>
</dbReference>
<dbReference type="RefSeq" id="NP_852108.3">
    <molecule id="Q9Y2F9-2"/>
    <property type="nucleotide sequence ID" value="NM_181443.4"/>
</dbReference>
<dbReference type="RefSeq" id="XP_016883217.1">
    <property type="nucleotide sequence ID" value="XM_017027728.1"/>
</dbReference>
<dbReference type="RefSeq" id="XP_016883218.1">
    <property type="nucleotide sequence ID" value="XM_017027729.1"/>
</dbReference>
<dbReference type="RefSeq" id="XP_047295969.1">
    <molecule id="Q9Y2F9-1"/>
    <property type="nucleotide sequence ID" value="XM_047440013.1"/>
</dbReference>
<dbReference type="RefSeq" id="XP_047295970.1">
    <molecule id="Q9Y2F9-2"/>
    <property type="nucleotide sequence ID" value="XM_047440014.1"/>
</dbReference>
<dbReference type="RefSeq" id="XP_054179173.1">
    <molecule id="Q9Y2F9-1"/>
    <property type="nucleotide sequence ID" value="XM_054323198.1"/>
</dbReference>
<dbReference type="SMR" id="Q9Y2F9"/>
<dbReference type="BioGRID" id="116567">
    <property type="interactions" value="23"/>
</dbReference>
<dbReference type="FunCoup" id="Q9Y2F9">
    <property type="interactions" value="2987"/>
</dbReference>
<dbReference type="IntAct" id="Q9Y2F9">
    <property type="interactions" value="19"/>
</dbReference>
<dbReference type="STRING" id="9606.ENSP00000384545"/>
<dbReference type="iPTMnet" id="Q9Y2F9"/>
<dbReference type="PhosphoSitePlus" id="Q9Y2F9"/>
<dbReference type="BioMuta" id="BTBD3"/>
<dbReference type="DMDM" id="20137580"/>
<dbReference type="jPOST" id="Q9Y2F9"/>
<dbReference type="MassIVE" id="Q9Y2F9"/>
<dbReference type="PaxDb" id="9606-ENSP00000384545"/>
<dbReference type="PeptideAtlas" id="Q9Y2F9"/>
<dbReference type="ProteomicsDB" id="85754">
    <molecule id="Q9Y2F9-1"/>
</dbReference>
<dbReference type="ProteomicsDB" id="85755">
    <molecule id="Q9Y2F9-2"/>
</dbReference>
<dbReference type="Pumba" id="Q9Y2F9"/>
<dbReference type="Antibodypedia" id="8935">
    <property type="antibodies" value="148 antibodies from 23 providers"/>
</dbReference>
<dbReference type="DNASU" id="22903"/>
<dbReference type="Ensembl" id="ENST00000254977.7">
    <molecule id="Q9Y2F9-2"/>
    <property type="protein sequence ID" value="ENSP00000254977.3"/>
    <property type="gene ID" value="ENSG00000132640.15"/>
</dbReference>
<dbReference type="Ensembl" id="ENST00000378226.7">
    <molecule id="Q9Y2F9-1"/>
    <property type="protein sequence ID" value="ENSP00000367471.2"/>
    <property type="gene ID" value="ENSG00000132640.15"/>
</dbReference>
<dbReference type="Ensembl" id="ENST00000399006.6">
    <molecule id="Q9Y2F9-2"/>
    <property type="protein sequence ID" value="ENSP00000381971.2"/>
    <property type="gene ID" value="ENSG00000132640.15"/>
</dbReference>
<dbReference type="Ensembl" id="ENST00000405977.5">
    <molecule id="Q9Y2F9-1"/>
    <property type="protein sequence ID" value="ENSP00000384545.1"/>
    <property type="gene ID" value="ENSG00000132640.15"/>
</dbReference>
<dbReference type="Ensembl" id="ENST00000618296.4">
    <molecule id="Q9Y2F9-2"/>
    <property type="protein sequence ID" value="ENSP00000477589.1"/>
    <property type="gene ID" value="ENSG00000132640.15"/>
</dbReference>
<dbReference type="Ensembl" id="ENST00000618918.4">
    <molecule id="Q9Y2F9-2"/>
    <property type="protein sequence ID" value="ENSP00000483520.1"/>
    <property type="gene ID" value="ENSG00000132640.15"/>
</dbReference>
<dbReference type="GeneID" id="22903"/>
<dbReference type="KEGG" id="hsa:22903"/>
<dbReference type="MANE-Select" id="ENST00000378226.7">
    <property type="protein sequence ID" value="ENSP00000367471.2"/>
    <property type="RefSeq nucleotide sequence ID" value="NM_014962.4"/>
    <property type="RefSeq protein sequence ID" value="NP_055777.1"/>
</dbReference>
<dbReference type="UCSC" id="uc002wny.5">
    <molecule id="Q9Y2F9-1"/>
    <property type="organism name" value="human"/>
</dbReference>
<dbReference type="AGR" id="HGNC:15854"/>
<dbReference type="CTD" id="22903"/>
<dbReference type="DisGeNET" id="22903"/>
<dbReference type="GeneCards" id="BTBD3"/>
<dbReference type="HGNC" id="HGNC:15854">
    <property type="gene designation" value="BTBD3"/>
</dbReference>
<dbReference type="HPA" id="ENSG00000132640">
    <property type="expression patterns" value="Tissue enhanced (brain)"/>
</dbReference>
<dbReference type="MIM" id="615566">
    <property type="type" value="gene"/>
</dbReference>
<dbReference type="neXtProt" id="NX_Q9Y2F9"/>
<dbReference type="OpenTargets" id="ENSG00000132640"/>
<dbReference type="PharmGKB" id="PA25440"/>
<dbReference type="VEuPathDB" id="HostDB:ENSG00000132640"/>
<dbReference type="eggNOG" id="KOG2075">
    <property type="taxonomic scope" value="Eukaryota"/>
</dbReference>
<dbReference type="GeneTree" id="ENSGT00940000156461"/>
<dbReference type="HOGENOM" id="CLU_015899_2_1_1"/>
<dbReference type="InParanoid" id="Q9Y2F9"/>
<dbReference type="OMA" id="SATVQEY"/>
<dbReference type="OrthoDB" id="636773at2759"/>
<dbReference type="PAN-GO" id="Q9Y2F9">
    <property type="GO annotations" value="4 GO annotations based on evolutionary models"/>
</dbReference>
<dbReference type="PhylomeDB" id="Q9Y2F9"/>
<dbReference type="TreeFam" id="TF106482"/>
<dbReference type="PathwayCommons" id="Q9Y2F9"/>
<dbReference type="SignaLink" id="Q9Y2F9"/>
<dbReference type="BioGRID-ORCS" id="22903">
    <property type="hits" value="19 hits in 1194 CRISPR screens"/>
</dbReference>
<dbReference type="ChiTaRS" id="BTBD3">
    <property type="organism name" value="human"/>
</dbReference>
<dbReference type="GenomeRNAi" id="22903"/>
<dbReference type="Pharos" id="Q9Y2F9">
    <property type="development level" value="Tbio"/>
</dbReference>
<dbReference type="PRO" id="PR:Q9Y2F9"/>
<dbReference type="Proteomes" id="UP000005640">
    <property type="component" value="Chromosome 20"/>
</dbReference>
<dbReference type="RNAct" id="Q9Y2F9">
    <property type="molecule type" value="protein"/>
</dbReference>
<dbReference type="Bgee" id="ENSG00000132640">
    <property type="expression patterns" value="Expressed in cerebellar vermis and 208 other cell types or tissues"/>
</dbReference>
<dbReference type="ExpressionAtlas" id="Q9Y2F9">
    <property type="expression patterns" value="baseline and differential"/>
</dbReference>
<dbReference type="GO" id="GO:0005829">
    <property type="term" value="C:cytosol"/>
    <property type="evidence" value="ECO:0000250"/>
    <property type="project" value="UniProtKB"/>
</dbReference>
<dbReference type="GO" id="GO:0005634">
    <property type="term" value="C:nucleus"/>
    <property type="evidence" value="ECO:0000250"/>
    <property type="project" value="UniProtKB"/>
</dbReference>
<dbReference type="GO" id="GO:0042802">
    <property type="term" value="F:identical protein binding"/>
    <property type="evidence" value="ECO:0000353"/>
    <property type="project" value="IntAct"/>
</dbReference>
<dbReference type="GO" id="GO:0021987">
    <property type="term" value="P:cerebral cortex development"/>
    <property type="evidence" value="ECO:0000250"/>
    <property type="project" value="UniProtKB"/>
</dbReference>
<dbReference type="GO" id="GO:0048813">
    <property type="term" value="P:dendrite morphogenesis"/>
    <property type="evidence" value="ECO:0000250"/>
    <property type="project" value="UniProtKB"/>
</dbReference>
<dbReference type="GO" id="GO:0022008">
    <property type="term" value="P:neurogenesis"/>
    <property type="evidence" value="ECO:0000318"/>
    <property type="project" value="GO_Central"/>
</dbReference>
<dbReference type="CDD" id="cd18524">
    <property type="entry name" value="BACK_BTBD3"/>
    <property type="match status" value="1"/>
</dbReference>
<dbReference type="CDD" id="cd18348">
    <property type="entry name" value="BTB_POZ_BTBD3"/>
    <property type="match status" value="1"/>
</dbReference>
<dbReference type="FunFam" id="1.25.40.420:FF:000003">
    <property type="entry name" value="BTB/POZ domain-containing protein 3"/>
    <property type="match status" value="1"/>
</dbReference>
<dbReference type="FunFam" id="2.60.120.820:FF:000001">
    <property type="entry name" value="BTB/POZ domain-containing protein 3"/>
    <property type="match status" value="1"/>
</dbReference>
<dbReference type="FunFam" id="3.30.710.10:FF:000015">
    <property type="entry name" value="BTB/POZ domain-containing protein 3"/>
    <property type="match status" value="1"/>
</dbReference>
<dbReference type="Gene3D" id="1.25.40.420">
    <property type="match status" value="1"/>
</dbReference>
<dbReference type="Gene3D" id="2.60.120.820">
    <property type="entry name" value="PHR domain"/>
    <property type="match status" value="1"/>
</dbReference>
<dbReference type="Gene3D" id="3.30.710.10">
    <property type="entry name" value="Potassium Channel Kv1.1, Chain A"/>
    <property type="match status" value="1"/>
</dbReference>
<dbReference type="InterPro" id="IPR011705">
    <property type="entry name" value="BACK"/>
</dbReference>
<dbReference type="InterPro" id="IPR000210">
    <property type="entry name" value="BTB/POZ_dom"/>
</dbReference>
<dbReference type="InterPro" id="IPR012983">
    <property type="entry name" value="PHR"/>
</dbReference>
<dbReference type="InterPro" id="IPR038648">
    <property type="entry name" value="PHR_sf"/>
</dbReference>
<dbReference type="InterPro" id="IPR011333">
    <property type="entry name" value="SKP1/BTB/POZ_sf"/>
</dbReference>
<dbReference type="PANTHER" id="PTHR45774">
    <property type="entry name" value="BTB/POZ DOMAIN-CONTAINING"/>
    <property type="match status" value="1"/>
</dbReference>
<dbReference type="PANTHER" id="PTHR45774:SF2">
    <property type="entry name" value="BTB_POZ DOMAIN-CONTAINING PROTEIN 3"/>
    <property type="match status" value="1"/>
</dbReference>
<dbReference type="Pfam" id="PF07707">
    <property type="entry name" value="BACK"/>
    <property type="match status" value="1"/>
</dbReference>
<dbReference type="Pfam" id="PF00651">
    <property type="entry name" value="BTB"/>
    <property type="match status" value="1"/>
</dbReference>
<dbReference type="Pfam" id="PF08005">
    <property type="entry name" value="PHR"/>
    <property type="match status" value="1"/>
</dbReference>
<dbReference type="SMART" id="SM00875">
    <property type="entry name" value="BACK"/>
    <property type="match status" value="1"/>
</dbReference>
<dbReference type="SMART" id="SM00225">
    <property type="entry name" value="BTB"/>
    <property type="match status" value="1"/>
</dbReference>
<dbReference type="SUPFAM" id="SSF54695">
    <property type="entry name" value="POZ domain"/>
    <property type="match status" value="1"/>
</dbReference>
<dbReference type="PROSITE" id="PS50097">
    <property type="entry name" value="BTB"/>
    <property type="match status" value="1"/>
</dbReference>
<comment type="function">
    <text evidence="1">Acts as a key regulator of dendritic field orientation during development of sensory cortex. Also directs dendrites toward active axon terminals when ectopically expressed (By similarity).</text>
</comment>
<comment type="interaction">
    <interactant intactId="EBI-311155">
        <id>Q9Y2F9</id>
    </interactant>
    <interactant intactId="EBI-311155">
        <id>Q9Y2F9</id>
        <label>BTBD3</label>
    </interactant>
    <organismsDiffer>false</organismsDiffer>
    <experiments>3</experiments>
</comment>
<comment type="interaction">
    <interactant intactId="EBI-311155">
        <id>Q9Y2F9</id>
    </interactant>
    <interactant intactId="EBI-12012762">
        <id>Q96KE9-2</id>
        <label>BTBD6</label>
    </interactant>
    <organismsDiffer>false</organismsDiffer>
    <experiments>3</experiments>
</comment>
<comment type="interaction">
    <interactant intactId="EBI-311155">
        <id>Q9Y2F9</id>
    </interactant>
    <interactant intactId="EBI-295634">
        <id>Q16543</id>
        <label>CDC37</label>
    </interactant>
    <organismsDiffer>false</organismsDiffer>
    <experiments>3</experiments>
</comment>
<comment type="interaction">
    <interactant intactId="EBI-311155">
        <id>Q9Y2F9</id>
    </interactant>
    <interactant intactId="EBI-456129">
        <id>Q13618</id>
        <label>CUL3</label>
    </interactant>
    <organismsDiffer>false</organismsDiffer>
    <experiments>3</experiments>
</comment>
<comment type="interaction">
    <interactant intactId="EBI-311155">
        <id>Q9Y2F9</id>
    </interactant>
    <interactant intactId="EBI-739467">
        <id>Q9H8Y8</id>
        <label>GORASP2</label>
    </interactant>
    <organismsDiffer>false</organismsDiffer>
    <experiments>3</experiments>
</comment>
<comment type="interaction">
    <interactant intactId="EBI-311155">
        <id>Q9Y2F9</id>
    </interactant>
    <interactant intactId="EBI-16439278">
        <id>Q6FHY5</id>
        <label>MEOX2</label>
    </interactant>
    <organismsDiffer>false</organismsDiffer>
    <experiments>3</experiments>
</comment>
<comment type="interaction">
    <interactant intactId="EBI-311155">
        <id>Q9Y2F9</id>
    </interactant>
    <interactant intactId="EBI-2340927">
        <id>P78317</id>
        <label>RNF4</label>
    </interactant>
    <organismsDiffer>false</organismsDiffer>
    <experiments>3</experiments>
</comment>
<comment type="interaction">
    <interactant intactId="EBI-311155">
        <id>Q9Y2F9</id>
    </interactant>
    <interactant intactId="EBI-80140">
        <id>P63165</id>
        <label>SUMO1</label>
    </interactant>
    <organismsDiffer>false</organismsDiffer>
    <experiments>3</experiments>
</comment>
<comment type="interaction">
    <interactant intactId="EBI-311155">
        <id>Q9Y2F9</id>
    </interactant>
    <interactant intactId="EBI-11139477">
        <id>Q96N21</id>
        <label>TEPSIN</label>
    </interactant>
    <organismsDiffer>false</organismsDiffer>
    <experiments>3</experiments>
</comment>
<comment type="interaction">
    <interactant intactId="EBI-311155">
        <id>Q9Y2F9</id>
    </interactant>
    <interactant intactId="EBI-10180829">
        <id>Q7KZS0</id>
        <label>UBE2I</label>
    </interactant>
    <organismsDiffer>false</organismsDiffer>
    <experiments>5</experiments>
</comment>
<comment type="subcellular location">
    <subcellularLocation>
        <location evidence="1">Cytoplasm</location>
        <location evidence="1">Cytosol</location>
    </subcellularLocation>
    <subcellularLocation>
        <location evidence="1">Nucleus</location>
    </subcellularLocation>
    <text evidence="1">Translocates from the cytosol to the nucleus in response to neuronal activity.</text>
</comment>
<comment type="alternative products">
    <event type="alternative splicing"/>
    <isoform>
        <id>Q9Y2F9-1</id>
        <name>1</name>
        <sequence type="displayed"/>
    </isoform>
    <isoform>
        <id>Q9Y2F9-2</id>
        <name>2</name>
        <sequence type="described" ref="VSP_041215"/>
    </isoform>
</comment>
<comment type="sequence caution" evidence="5">
    <conflict type="erroneous initiation">
        <sequence resource="EMBL-CDS" id="BAA76796"/>
    </conflict>
    <text>Extended N-terminus.</text>
</comment>
<gene>
    <name type="primary">BTBD3</name>
    <name type="synonym">KIAA0952</name>
</gene>
<feature type="chain" id="PRO_0000186211" description="BTB/POZ domain-containing protein 3">
    <location>
        <begin position="1"/>
        <end position="522"/>
    </location>
</feature>
<feature type="domain" description="BTB" evidence="2">
    <location>
        <begin position="120"/>
        <end position="190"/>
    </location>
</feature>
<feature type="domain" description="BACK">
    <location>
        <begin position="235"/>
        <end position="300"/>
    </location>
</feature>
<feature type="region of interest" description="Disordered" evidence="3">
    <location>
        <begin position="25"/>
        <end position="44"/>
    </location>
</feature>
<feature type="compositionally biased region" description="Low complexity" evidence="3">
    <location>
        <begin position="32"/>
        <end position="44"/>
    </location>
</feature>
<feature type="splice variant" id="VSP_041215" description="In isoform 2." evidence="4">
    <location>
        <begin position="1"/>
        <end position="61"/>
    </location>
</feature>
<keyword id="KW-0025">Alternative splicing</keyword>
<keyword id="KW-0963">Cytoplasm</keyword>
<keyword id="KW-0524">Neurogenesis</keyword>
<keyword id="KW-0539">Nucleus</keyword>
<keyword id="KW-1267">Proteomics identification</keyword>
<keyword id="KW-1185">Reference proteome</keyword>